<organism>
    <name type="scientific">Mycobacterium leprae (strain Br4923)</name>
    <dbReference type="NCBI Taxonomy" id="561304"/>
    <lineage>
        <taxon>Bacteria</taxon>
        <taxon>Bacillati</taxon>
        <taxon>Actinomycetota</taxon>
        <taxon>Actinomycetes</taxon>
        <taxon>Mycobacteriales</taxon>
        <taxon>Mycobacteriaceae</taxon>
        <taxon>Mycobacterium</taxon>
    </lineage>
</organism>
<evidence type="ECO:0000255" key="1">
    <source>
        <dbReference type="HAMAP-Rule" id="MF_01408"/>
    </source>
</evidence>
<evidence type="ECO:0000255" key="2">
    <source>
        <dbReference type="PROSITE-ProRule" id="PRU00661"/>
    </source>
</evidence>
<gene>
    <name evidence="1" type="primary">thyX</name>
    <name type="ordered locus">MLBr01514</name>
</gene>
<proteinExistence type="inferred from homology"/>
<dbReference type="EC" id="2.1.1.148" evidence="1"/>
<dbReference type="EMBL" id="FM211192">
    <property type="protein sequence ID" value="CAR71609.1"/>
    <property type="molecule type" value="Genomic_DNA"/>
</dbReference>
<dbReference type="SMR" id="B8ZRR4"/>
<dbReference type="KEGG" id="mlb:MLBr01514"/>
<dbReference type="HOGENOM" id="CLU_077585_1_0_11"/>
<dbReference type="UniPathway" id="UPA00575"/>
<dbReference type="Proteomes" id="UP000006900">
    <property type="component" value="Chromosome"/>
</dbReference>
<dbReference type="GO" id="GO:0050660">
    <property type="term" value="F:flavin adenine dinucleotide binding"/>
    <property type="evidence" value="ECO:0007669"/>
    <property type="project" value="InterPro"/>
</dbReference>
<dbReference type="GO" id="GO:0070402">
    <property type="term" value="F:NADPH binding"/>
    <property type="evidence" value="ECO:0007669"/>
    <property type="project" value="TreeGrafter"/>
</dbReference>
<dbReference type="GO" id="GO:0050797">
    <property type="term" value="F:thymidylate synthase (FAD) activity"/>
    <property type="evidence" value="ECO:0007669"/>
    <property type="project" value="UniProtKB-UniRule"/>
</dbReference>
<dbReference type="GO" id="GO:0004799">
    <property type="term" value="F:thymidylate synthase activity"/>
    <property type="evidence" value="ECO:0007669"/>
    <property type="project" value="TreeGrafter"/>
</dbReference>
<dbReference type="GO" id="GO:0006231">
    <property type="term" value="P:dTMP biosynthetic process"/>
    <property type="evidence" value="ECO:0007669"/>
    <property type="project" value="UniProtKB-UniRule"/>
</dbReference>
<dbReference type="GO" id="GO:0006235">
    <property type="term" value="P:dTTP biosynthetic process"/>
    <property type="evidence" value="ECO:0007669"/>
    <property type="project" value="UniProtKB-UniRule"/>
</dbReference>
<dbReference type="GO" id="GO:0032259">
    <property type="term" value="P:methylation"/>
    <property type="evidence" value="ECO:0007669"/>
    <property type="project" value="UniProtKB-KW"/>
</dbReference>
<dbReference type="CDD" id="cd20175">
    <property type="entry name" value="ThyX"/>
    <property type="match status" value="1"/>
</dbReference>
<dbReference type="Gene3D" id="3.30.70.3180">
    <property type="match status" value="2"/>
</dbReference>
<dbReference type="Gene3D" id="6.10.140.450">
    <property type="match status" value="1"/>
</dbReference>
<dbReference type="HAMAP" id="MF_01408">
    <property type="entry name" value="ThyX"/>
    <property type="match status" value="1"/>
</dbReference>
<dbReference type="InterPro" id="IPR003669">
    <property type="entry name" value="Thymidylate_synthase_ThyX"/>
</dbReference>
<dbReference type="InterPro" id="IPR036098">
    <property type="entry name" value="Thymidylate_synthase_ThyX_sf"/>
</dbReference>
<dbReference type="NCBIfam" id="TIGR02170">
    <property type="entry name" value="thyX"/>
    <property type="match status" value="1"/>
</dbReference>
<dbReference type="PANTHER" id="PTHR34934">
    <property type="entry name" value="FLAVIN-DEPENDENT THYMIDYLATE SYNTHASE"/>
    <property type="match status" value="1"/>
</dbReference>
<dbReference type="PANTHER" id="PTHR34934:SF1">
    <property type="entry name" value="FLAVIN-DEPENDENT THYMIDYLATE SYNTHASE"/>
    <property type="match status" value="1"/>
</dbReference>
<dbReference type="Pfam" id="PF02511">
    <property type="entry name" value="Thy1"/>
    <property type="match status" value="1"/>
</dbReference>
<dbReference type="SUPFAM" id="SSF69796">
    <property type="entry name" value="Thymidylate synthase-complementing protein Thy1"/>
    <property type="match status" value="1"/>
</dbReference>
<dbReference type="PROSITE" id="PS51331">
    <property type="entry name" value="THYX"/>
    <property type="match status" value="1"/>
</dbReference>
<comment type="function">
    <text evidence="1">Catalyzes the reductive methylation of 2'-deoxyuridine-5'-monophosphate (dUMP) to 2'-deoxythymidine-5'-monophosphate (dTMP) while utilizing 5,10-methylenetetrahydrofolate (mTHF) as the methyl donor, and NADPH and FADH(2) as the reductant.</text>
</comment>
<comment type="catalytic activity">
    <reaction evidence="1">
        <text>dUMP + (6R)-5,10-methylene-5,6,7,8-tetrahydrofolate + NADPH + H(+) = dTMP + (6S)-5,6,7,8-tetrahydrofolate + NADP(+)</text>
        <dbReference type="Rhea" id="RHEA:29043"/>
        <dbReference type="ChEBI" id="CHEBI:15378"/>
        <dbReference type="ChEBI" id="CHEBI:15636"/>
        <dbReference type="ChEBI" id="CHEBI:57453"/>
        <dbReference type="ChEBI" id="CHEBI:57783"/>
        <dbReference type="ChEBI" id="CHEBI:58349"/>
        <dbReference type="ChEBI" id="CHEBI:63528"/>
        <dbReference type="ChEBI" id="CHEBI:246422"/>
        <dbReference type="EC" id="2.1.1.148"/>
    </reaction>
</comment>
<comment type="cofactor">
    <cofactor evidence="1">
        <name>FAD</name>
        <dbReference type="ChEBI" id="CHEBI:57692"/>
    </cofactor>
    <text evidence="1">Binds 4 FAD per tetramer. Each FAD binding site is formed by three monomers.</text>
</comment>
<comment type="pathway">
    <text evidence="1">Pyrimidine metabolism; dTTP biosynthesis.</text>
</comment>
<comment type="subunit">
    <text evidence="1">Homotetramer.</text>
</comment>
<comment type="similarity">
    <text evidence="1">Belongs to the thymidylate synthase ThyX family.</text>
</comment>
<keyword id="KW-0274">FAD</keyword>
<keyword id="KW-0285">Flavoprotein</keyword>
<keyword id="KW-0489">Methyltransferase</keyword>
<keyword id="KW-0521">NADP</keyword>
<keyword id="KW-0545">Nucleotide biosynthesis</keyword>
<keyword id="KW-0808">Transferase</keyword>
<name>THYX_MYCLB</name>
<protein>
    <recommendedName>
        <fullName evidence="1">Flavin-dependent thymidylate synthase</fullName>
        <shortName evidence="1">FDTS</shortName>
        <ecNumber evidence="1">2.1.1.148</ecNumber>
    </recommendedName>
    <alternativeName>
        <fullName evidence="1">FAD-dependent thymidylate synthase</fullName>
    </alternativeName>
    <alternativeName>
        <fullName evidence="1">Thymidylate synthase ThyX</fullName>
        <shortName evidence="1">TS</shortName>
        <shortName evidence="1">TSase</shortName>
    </alternativeName>
</protein>
<reference key="1">
    <citation type="journal article" date="2009" name="Nat. Genet.">
        <title>Comparative genomic and phylogeographic analysis of Mycobacterium leprae.</title>
        <authorList>
            <person name="Monot M."/>
            <person name="Honore N."/>
            <person name="Garnier T."/>
            <person name="Zidane N."/>
            <person name="Sherafi D."/>
            <person name="Paniz-Mondolfi A."/>
            <person name="Matsuoka M."/>
            <person name="Taylor G.M."/>
            <person name="Donoghue H.D."/>
            <person name="Bouwman A."/>
            <person name="Mays S."/>
            <person name="Watson C."/>
            <person name="Lockwood D."/>
            <person name="Khamispour A."/>
            <person name="Dowlati Y."/>
            <person name="Jianping S."/>
            <person name="Rea T.H."/>
            <person name="Vera-Cabrera L."/>
            <person name="Stefani M.M."/>
            <person name="Banu S."/>
            <person name="Macdonald M."/>
            <person name="Sapkota B.R."/>
            <person name="Spencer J.S."/>
            <person name="Thomas J."/>
            <person name="Harshman K."/>
            <person name="Singh P."/>
            <person name="Busso P."/>
            <person name="Gattiker A."/>
            <person name="Rougemont J."/>
            <person name="Brennan P.J."/>
            <person name="Cole S.T."/>
        </authorList>
    </citation>
    <scope>NUCLEOTIDE SEQUENCE [LARGE SCALE GENOMIC DNA]</scope>
    <source>
        <strain>Br4923</strain>
    </source>
</reference>
<feature type="chain" id="PRO_1000184593" description="Flavin-dependent thymidylate synthase">
    <location>
        <begin position="1"/>
        <end position="254"/>
    </location>
</feature>
<feature type="domain" description="ThyX" evidence="2">
    <location>
        <begin position="7"/>
        <end position="237"/>
    </location>
</feature>
<feature type="short sequence motif" description="ThyX motif" evidence="1">
    <location>
        <begin position="95"/>
        <end position="105"/>
    </location>
</feature>
<feature type="active site" description="Involved in ionization of N3 of dUMP, leading to its activation" evidence="1">
    <location>
        <position position="203"/>
    </location>
</feature>
<feature type="binding site" evidence="1">
    <location>
        <begin position="92"/>
        <end position="95"/>
    </location>
    <ligand>
        <name>dUMP</name>
        <dbReference type="ChEBI" id="CHEBI:246422"/>
        <note>ligand shared between dimeric partners</note>
    </ligand>
</feature>
<feature type="binding site" evidence="1">
    <location>
        <begin position="95"/>
        <end position="97"/>
    </location>
    <ligand>
        <name>FAD</name>
        <dbReference type="ChEBI" id="CHEBI:57692"/>
        <note>ligand shared between neighboring subunits</note>
    </ligand>
</feature>
<feature type="binding site" description="in other chain" evidence="1">
    <location>
        <begin position="103"/>
        <end position="107"/>
    </location>
    <ligand>
        <name>dUMP</name>
        <dbReference type="ChEBI" id="CHEBI:246422"/>
        <note>ligand shared between dimeric partners</note>
    </ligand>
</feature>
<feature type="binding site" evidence="1">
    <location>
        <position position="103"/>
    </location>
    <ligand>
        <name>FAD</name>
        <dbReference type="ChEBI" id="CHEBI:57692"/>
        <note>ligand shared between neighboring subunits</note>
    </ligand>
</feature>
<feature type="binding site" description="in other chain" evidence="1">
    <location>
        <position position="176"/>
    </location>
    <ligand>
        <name>dUMP</name>
        <dbReference type="ChEBI" id="CHEBI:246422"/>
        <note>ligand shared between dimeric partners</note>
    </ligand>
</feature>
<feature type="binding site" evidence="1">
    <location>
        <begin position="192"/>
        <end position="194"/>
    </location>
    <ligand>
        <name>FAD</name>
        <dbReference type="ChEBI" id="CHEBI:57692"/>
        <note>ligand shared between neighboring subunits</note>
    </ligand>
</feature>
<feature type="binding site" evidence="1">
    <location>
        <position position="198"/>
    </location>
    <ligand>
        <name>FAD</name>
        <dbReference type="ChEBI" id="CHEBI:57692"/>
        <note>ligand shared between neighboring subunits</note>
    </ligand>
</feature>
<feature type="binding site" evidence="1">
    <location>
        <position position="203"/>
    </location>
    <ligand>
        <name>dUMP</name>
        <dbReference type="ChEBI" id="CHEBI:246422"/>
        <note>ligand shared between dimeric partners</note>
    </ligand>
</feature>
<accession>B8ZRR4</accession>
<sequence>MAQIAPLRVQLIAKTEFLAPPDVSWTTDADGGSALVEFAGRACYQSWSKPNPRTATNAAYIKHIIDVGHVAVLEHASVSFYISGISRSCTHELIRHRHFSYSQLSQRYVPEKDAQVVVPPDMEDDDELQQILIAAVEASRATYTELLVKLNAKLMAGELGGNRAVLRRKQARQAAHAVLPNANETRIVVTGNYRAWRHFIAMRASEHADVEIRRLAIVCLRRLVDVAPAVFADFEITALADGTEVATSPLATEA</sequence>